<gene>
    <name type="primary">dpoZ</name>
</gene>
<protein>
    <recommendedName>
        <fullName evidence="2">DNA polymerase DpoZ</fullName>
    </recommendedName>
</protein>
<sequence>MAIFPRLENYSEVAIDTETTGLDWFRNDKPFGVAIALPNGYSEYYDIRKDLAAYQWLRDSVHKIRRAVNHNMKFDIHMLRKIDVHVNTRTAECTQIRAALINEHLMSYSLDSLAKKYLKAEKVDDIYEELAKLFGGPATRKAQAPNFHRAPESMMRRYAKVDAELALQLWQWQEEEIARQDLHEVWRLEMRLQPHVIESERVGIRVDEELAHKRIGDLTKIVDQTRKEINRLAGFEVNPNPSGSIKRLFEPYKEGDQWYAKDGTPIGTTDAGQPSLGADALKAIKHPAAGLILKCRKMIKTRDTFISGHVLGNIVDGYVHPNINQTKGETGGDDSGTEGTGTGRLSYTRPALQQIPSRDKEVAALVRPIFLPDEGQQWTYGDLDQHEFRIFAHYANPKSLIDAYTENPDLDMHQIVADMTGMPRSAPASGGANAKQINLAMVFNMGGGELASQMSLPYTWETATFKGESEARRFKKAGEEALAVMEKYYRAIPGVREVARQASSLAKSRGYVKTMYGRKIRFPGGMFTYKASGLVYQGTAADFNKRNICEIAEYIESECPHYRFLLNIHDEYSMSMVDEGDITVRHLKEMKRLVENKGLRVPIRIDFGGLAPNWWEATKMDAVTK</sequence>
<evidence type="ECO:0000250" key="1">
    <source>
        <dbReference type="UniProtKB" id="A0A2H5BHJ5"/>
    </source>
</evidence>
<evidence type="ECO:0000250" key="2">
    <source>
        <dbReference type="UniProtKB" id="G3FFN8"/>
    </source>
</evidence>
<evidence type="ECO:0000256" key="3">
    <source>
        <dbReference type="SAM" id="MobiDB-lite"/>
    </source>
</evidence>
<evidence type="ECO:0000305" key="4"/>
<name>DPOZ_BPPMB</name>
<organismHost>
    <name type="scientific">Salmonella enterica</name>
    <name type="common">Salmonella choleraesuis</name>
    <dbReference type="NCBI Taxonomy" id="28901"/>
</organismHost>
<dbReference type="EMBL" id="MG641885">
    <property type="protein sequence ID" value="AUZ95520.1"/>
    <property type="molecule type" value="Genomic_DNA"/>
</dbReference>
<dbReference type="SMR" id="A0A2L0V166"/>
<dbReference type="Proteomes" id="UP000241443">
    <property type="component" value="Genome"/>
</dbReference>
<dbReference type="GO" id="GO:0008408">
    <property type="term" value="F:3'-5' exonuclease activity"/>
    <property type="evidence" value="ECO:0007669"/>
    <property type="project" value="InterPro"/>
</dbReference>
<dbReference type="GO" id="GO:0003677">
    <property type="term" value="F:DNA binding"/>
    <property type="evidence" value="ECO:0007669"/>
    <property type="project" value="InterPro"/>
</dbReference>
<dbReference type="GO" id="GO:0003887">
    <property type="term" value="F:DNA-directed DNA polymerase activity"/>
    <property type="evidence" value="ECO:0007669"/>
    <property type="project" value="InterPro"/>
</dbReference>
<dbReference type="GO" id="GO:0006261">
    <property type="term" value="P:DNA-templated DNA replication"/>
    <property type="evidence" value="ECO:0007669"/>
    <property type="project" value="InterPro"/>
</dbReference>
<dbReference type="GO" id="GO:0006302">
    <property type="term" value="P:double-strand break repair"/>
    <property type="evidence" value="ECO:0007669"/>
    <property type="project" value="TreeGrafter"/>
</dbReference>
<dbReference type="GO" id="GO:0039693">
    <property type="term" value="P:viral DNA genome replication"/>
    <property type="evidence" value="ECO:0007669"/>
    <property type="project" value="UniProtKB-KW"/>
</dbReference>
<dbReference type="Gene3D" id="3.30.70.370">
    <property type="match status" value="1"/>
</dbReference>
<dbReference type="Gene3D" id="1.10.150.20">
    <property type="entry name" value="5' to 3' exonuclease, C-terminal subdomain"/>
    <property type="match status" value="1"/>
</dbReference>
<dbReference type="Gene3D" id="3.30.420.10">
    <property type="entry name" value="Ribonuclease H-like superfamily/Ribonuclease H"/>
    <property type="match status" value="1"/>
</dbReference>
<dbReference type="Gene3D" id="1.20.1060.10">
    <property type="entry name" value="Taq DNA Polymerase, Chain T, domain 4"/>
    <property type="match status" value="1"/>
</dbReference>
<dbReference type="InterPro" id="IPR002562">
    <property type="entry name" value="3'-5'_exonuclease_dom"/>
</dbReference>
<dbReference type="InterPro" id="IPR001098">
    <property type="entry name" value="DNA-dir_DNA_pol_A_palm_dom"/>
</dbReference>
<dbReference type="InterPro" id="IPR043502">
    <property type="entry name" value="DNA/RNA_pol_sf"/>
</dbReference>
<dbReference type="InterPro" id="IPR002298">
    <property type="entry name" value="DNA_polymerase_A"/>
</dbReference>
<dbReference type="InterPro" id="IPR012337">
    <property type="entry name" value="RNaseH-like_sf"/>
</dbReference>
<dbReference type="InterPro" id="IPR036397">
    <property type="entry name" value="RNaseH_sf"/>
</dbReference>
<dbReference type="NCBIfam" id="NF038380">
    <property type="entry name" value="phage_DpoZ_1"/>
    <property type="match status" value="1"/>
</dbReference>
<dbReference type="PANTHER" id="PTHR10133">
    <property type="entry name" value="DNA POLYMERASE I"/>
    <property type="match status" value="1"/>
</dbReference>
<dbReference type="PANTHER" id="PTHR10133:SF27">
    <property type="entry name" value="DNA POLYMERASE NU"/>
    <property type="match status" value="1"/>
</dbReference>
<dbReference type="Pfam" id="PF00476">
    <property type="entry name" value="DNA_pol_A"/>
    <property type="match status" value="1"/>
</dbReference>
<dbReference type="Pfam" id="PF01612">
    <property type="entry name" value="DNA_pol_A_exo1"/>
    <property type="match status" value="1"/>
</dbReference>
<dbReference type="PRINTS" id="PR00868">
    <property type="entry name" value="DNAPOLI"/>
</dbReference>
<dbReference type="SMART" id="SM00482">
    <property type="entry name" value="POLAc"/>
    <property type="match status" value="1"/>
</dbReference>
<dbReference type="SUPFAM" id="SSF56672">
    <property type="entry name" value="DNA/RNA polymerases"/>
    <property type="match status" value="1"/>
</dbReference>
<dbReference type="SUPFAM" id="SSF53098">
    <property type="entry name" value="Ribonuclease H-like"/>
    <property type="match status" value="1"/>
</dbReference>
<accession>A0A2L0V166</accession>
<organism>
    <name type="scientific">Salmonella phage PMBT28</name>
    <dbReference type="NCBI Taxonomy" id="2081904"/>
    <lineage>
        <taxon>Viruses</taxon>
        <taxon>Duplodnaviria</taxon>
        <taxon>Heunggongvirae</taxon>
        <taxon>Uroviricota</taxon>
        <taxon>Caudoviricetes</taxon>
    </lineage>
</organism>
<feature type="chain" id="PRO_0000453688" description="DNA polymerase DpoZ">
    <location>
        <begin position="1"/>
        <end position="625"/>
    </location>
</feature>
<feature type="region of interest" description="Disordered" evidence="3">
    <location>
        <begin position="324"/>
        <end position="345"/>
    </location>
</feature>
<proteinExistence type="inferred from homology"/>
<comment type="function">
    <text evidence="1">DNA polymerase that preferentially incorporates the non-canonical base aminoadenine/dZTP instead of adenine into the synthesized DNA. More efficient in using dZTP instead of dATP as a substrate. In addition to this preference for dZTP, the phage also encodes a dATP triphosphohydrolase that removes dATP and its precursor dADP from the nucleotide pool of the host.</text>
</comment>
<comment type="catalytic activity">
    <reaction evidence="1">
        <text>DNA(n) + a 2'-deoxyribonucleoside 5'-triphosphate = DNA(n+1) + diphosphate</text>
        <dbReference type="Rhea" id="RHEA:22508"/>
        <dbReference type="Rhea" id="RHEA-COMP:17339"/>
        <dbReference type="Rhea" id="RHEA-COMP:17340"/>
        <dbReference type="ChEBI" id="CHEBI:33019"/>
        <dbReference type="ChEBI" id="CHEBI:61560"/>
        <dbReference type="ChEBI" id="CHEBI:173112"/>
    </reaction>
</comment>
<comment type="catalytic activity">
    <reaction evidence="1">
        <text>dZTP + DNA(n) = DNA(n)-Z + diphosphate</text>
        <dbReference type="Rhea" id="RHEA:67728"/>
        <dbReference type="Rhea" id="RHEA-COMP:17339"/>
        <dbReference type="Rhea" id="RHEA-COMP:17341"/>
        <dbReference type="ChEBI" id="CHEBI:33019"/>
        <dbReference type="ChEBI" id="CHEBI:172931"/>
        <dbReference type="ChEBI" id="CHEBI:172959"/>
        <dbReference type="ChEBI" id="CHEBI:173112"/>
    </reaction>
</comment>
<comment type="similarity">
    <text evidence="4">Belongs to the DNA polymerase type-A family. DpoZ subfamily.</text>
</comment>
<keyword id="KW-0235">DNA replication</keyword>
<keyword id="KW-1185">Reference proteome</keyword>
<keyword id="KW-1194">Viral DNA replication</keyword>
<reference key="1">
    <citation type="journal article" date="2018" name="Genome Announc.">
        <title>Complete Genome Sequence of the Novel Virulent Phage PMBT28 with Lytic Activity against Thermotolerant Salmonella enterica subsp. enterica Serovar Senftenberg ATCC 43845.</title>
        <authorList>
            <person name="Koberg S."/>
            <person name="Brinks E."/>
            <person name="Albrecht V."/>
            <person name="Neve H."/>
            <person name="Franz C.M.A.P."/>
        </authorList>
    </citation>
    <scope>NUCLEOTIDE SEQUENCE [LARGE SCALE GENOMIC DNA]</scope>
</reference>